<sequence length="129" mass="14888">MQEMSSIPNVIFILCDIANKIELLNSTFDKKKFDVVLSDMAPKACGNKQVDHANIINLCEMSLEIAVKFIKPNGIFITKILQGEYEKEFYQSVKYHFNSVKYFKPKASRKDSSEMYLVSLGFKENLEYI</sequence>
<accession>Q5FEH6</accession>
<feature type="chain" id="PRO_0000155495" description="Ribosomal RNA large subunit methyltransferase E">
    <location>
        <begin position="1"/>
        <end position="129"/>
    </location>
</feature>
<feature type="active site" description="Proton acceptor" evidence="1">
    <location>
        <position position="79"/>
    </location>
</feature>
<reference key="1">
    <citation type="journal article" date="2005" name="Proc. Natl. Acad. Sci. U.S.A.">
        <title>The genome of the heartwater agent Ehrlichia ruminantium contains multiple tandem repeats of actively variable copy number.</title>
        <authorList>
            <person name="Collins N.E."/>
            <person name="Liebenberg J."/>
            <person name="de Villiers E.P."/>
            <person name="Brayton K.A."/>
            <person name="Louw E."/>
            <person name="Pretorius A."/>
            <person name="Faber F.E."/>
            <person name="van Heerden H."/>
            <person name="Josemans A."/>
            <person name="van Kleef M."/>
            <person name="Steyn H.C."/>
            <person name="van Strijp M.F."/>
            <person name="Zweygarth E."/>
            <person name="Jongejan F."/>
            <person name="Maillard J.C."/>
            <person name="Berthier D."/>
            <person name="Botha M."/>
            <person name="Joubert F."/>
            <person name="Corton C.H."/>
            <person name="Thomson N.R."/>
            <person name="Allsopp M.T."/>
            <person name="Allsopp B.A."/>
        </authorList>
    </citation>
    <scope>NUCLEOTIDE SEQUENCE [LARGE SCALE GENOMIC DNA]</scope>
    <source>
        <strain>Welgevonden</strain>
    </source>
</reference>
<reference key="2">
    <citation type="journal article" date="2006" name="J. Bacteriol.">
        <title>Comparative genomic analysis of three strains of Ehrlichia ruminantium reveals an active process of genome size plasticity.</title>
        <authorList>
            <person name="Frutos R."/>
            <person name="Viari A."/>
            <person name="Ferraz C."/>
            <person name="Morgat A."/>
            <person name="Eychenie S."/>
            <person name="Kandassamy Y."/>
            <person name="Chantal I."/>
            <person name="Bensaid A."/>
            <person name="Coissac E."/>
            <person name="Vachiery N."/>
            <person name="Demaille J."/>
            <person name="Martinez D."/>
        </authorList>
    </citation>
    <scope>NUCLEOTIDE SEQUENCE [LARGE SCALE GENOMIC DNA]</scope>
    <source>
        <strain>Welgevonden</strain>
    </source>
</reference>
<protein>
    <recommendedName>
        <fullName>Ribosomal RNA large subunit methyltransferase E</fullName>
        <ecNumber>2.1.1.166</ecNumber>
    </recommendedName>
    <alternativeName>
        <fullName>23S rRNA Um2552 methyltransferase</fullName>
    </alternativeName>
    <alternativeName>
        <fullName>rRNA (uridine-2'-O-)-methyltransferase</fullName>
    </alternativeName>
</protein>
<evidence type="ECO:0000250" key="1"/>
<evidence type="ECO:0000305" key="2"/>
<gene>
    <name type="primary">rlmE</name>
    <name type="synonym">ftsJ</name>
    <name type="synonym">rrmJ</name>
    <name type="ordered locus">Erum4940</name>
    <name type="ordered locus">ERWE_CDS_05160</name>
</gene>
<keyword id="KW-0963">Cytoplasm</keyword>
<keyword id="KW-0489">Methyltransferase</keyword>
<keyword id="KW-0698">rRNA processing</keyword>
<keyword id="KW-0949">S-adenosyl-L-methionine</keyword>
<keyword id="KW-0808">Transferase</keyword>
<organism>
    <name type="scientific">Ehrlichia ruminantium (strain Welgevonden)</name>
    <dbReference type="NCBI Taxonomy" id="254945"/>
    <lineage>
        <taxon>Bacteria</taxon>
        <taxon>Pseudomonadati</taxon>
        <taxon>Pseudomonadota</taxon>
        <taxon>Alphaproteobacteria</taxon>
        <taxon>Rickettsiales</taxon>
        <taxon>Anaplasmataceae</taxon>
        <taxon>Ehrlichia</taxon>
    </lineage>
</organism>
<comment type="function">
    <text evidence="1">Specifically methylates the uridine in position 2552 of 23S rRNA at the 2'-O position of the ribose in the fully assembled 50S ribosomal subunit.</text>
</comment>
<comment type="catalytic activity">
    <reaction>
        <text>uridine(2552) in 23S rRNA + S-adenosyl-L-methionine = 2'-O-methyluridine(2552) in 23S rRNA + S-adenosyl-L-homocysteine + H(+)</text>
        <dbReference type="Rhea" id="RHEA:42720"/>
        <dbReference type="Rhea" id="RHEA-COMP:10202"/>
        <dbReference type="Rhea" id="RHEA-COMP:10203"/>
        <dbReference type="ChEBI" id="CHEBI:15378"/>
        <dbReference type="ChEBI" id="CHEBI:57856"/>
        <dbReference type="ChEBI" id="CHEBI:59789"/>
        <dbReference type="ChEBI" id="CHEBI:65315"/>
        <dbReference type="ChEBI" id="CHEBI:74478"/>
        <dbReference type="EC" id="2.1.1.166"/>
    </reaction>
</comment>
<comment type="subcellular location">
    <subcellularLocation>
        <location evidence="1">Cytoplasm</location>
    </subcellularLocation>
</comment>
<comment type="similarity">
    <text evidence="2">Belongs to the class I-like SAM-binding methyltransferase superfamily. RNA methyltransferase RlmE family.</text>
</comment>
<proteinExistence type="inferred from homology"/>
<name>RLME_EHRRW</name>
<dbReference type="EC" id="2.1.1.166"/>
<dbReference type="EMBL" id="CR767821">
    <property type="status" value="NOT_ANNOTATED_CDS"/>
    <property type="molecule type" value="Genomic_DNA"/>
</dbReference>
<dbReference type="EMBL" id="CR925678">
    <property type="protein sequence ID" value="CAI27010.1"/>
    <property type="molecule type" value="Genomic_DNA"/>
</dbReference>
<dbReference type="SMR" id="Q5FEH6"/>
<dbReference type="KEGG" id="erw:ERWE_CDS_05160"/>
<dbReference type="HOGENOM" id="CLU_009422_4_4_5"/>
<dbReference type="Proteomes" id="UP000001021">
    <property type="component" value="Chromosome"/>
</dbReference>
<dbReference type="GO" id="GO:0005737">
    <property type="term" value="C:cytoplasm"/>
    <property type="evidence" value="ECO:0007669"/>
    <property type="project" value="UniProtKB-SubCell"/>
</dbReference>
<dbReference type="GO" id="GO:0008650">
    <property type="term" value="F:rRNA (uridine-2'-O-)-methyltransferase activity"/>
    <property type="evidence" value="ECO:0007669"/>
    <property type="project" value="TreeGrafter"/>
</dbReference>
<dbReference type="Gene3D" id="3.40.50.150">
    <property type="entry name" value="Vaccinia Virus protein VP39"/>
    <property type="match status" value="1"/>
</dbReference>
<dbReference type="InterPro" id="IPR050082">
    <property type="entry name" value="RNA_methyltr_RlmE"/>
</dbReference>
<dbReference type="InterPro" id="IPR002877">
    <property type="entry name" value="RNA_MeTrfase_FtsJ_dom"/>
</dbReference>
<dbReference type="InterPro" id="IPR029063">
    <property type="entry name" value="SAM-dependent_MTases_sf"/>
</dbReference>
<dbReference type="PANTHER" id="PTHR10920">
    <property type="entry name" value="RIBOSOMAL RNA METHYLTRANSFERASE"/>
    <property type="match status" value="1"/>
</dbReference>
<dbReference type="PANTHER" id="PTHR10920:SF18">
    <property type="entry name" value="RRNA METHYLTRANSFERASE 2, MITOCHONDRIAL"/>
    <property type="match status" value="1"/>
</dbReference>
<dbReference type="Pfam" id="PF01728">
    <property type="entry name" value="FtsJ"/>
    <property type="match status" value="1"/>
</dbReference>
<dbReference type="SUPFAM" id="SSF53335">
    <property type="entry name" value="S-adenosyl-L-methionine-dependent methyltransferases"/>
    <property type="match status" value="1"/>
</dbReference>